<keyword id="KW-0275">Fatty acid biosynthesis</keyword>
<keyword id="KW-0276">Fatty acid metabolism</keyword>
<keyword id="KW-0444">Lipid biosynthesis</keyword>
<keyword id="KW-0443">Lipid metabolism</keyword>
<keyword id="KW-0472">Membrane</keyword>
<keyword id="KW-1185">Reference proteome</keyword>
<keyword id="KW-0808">Transferase</keyword>
<keyword id="KW-0812">Transmembrane</keyword>
<keyword id="KW-1133">Transmembrane helix</keyword>
<organism evidence="8">
    <name type="scientific">Trypanosoma cruzi (strain CL Brener)</name>
    <dbReference type="NCBI Taxonomy" id="353153"/>
    <lineage>
        <taxon>Eukaryota</taxon>
        <taxon>Discoba</taxon>
        <taxon>Euglenozoa</taxon>
        <taxon>Kinetoplastea</taxon>
        <taxon>Metakinetoplastina</taxon>
        <taxon>Trypanosomatida</taxon>
        <taxon>Trypanosomatidae</taxon>
        <taxon>Trypanosoma</taxon>
        <taxon>Schizotrypanum</taxon>
    </lineage>
</organism>
<protein>
    <recommendedName>
        <fullName evidence="5">Very long chain fatty acid elongase 4</fullName>
        <shortName evidence="5">TcELO4</shortName>
        <ecNumber evidence="3">2.3.1.199</ecNumber>
    </recommendedName>
    <alternativeName>
        <fullName evidence="3">Elongation of fatty acids protein</fullName>
    </alternativeName>
    <alternativeName>
        <fullName evidence="3">Very-long-chain 3-oxoacyl-CoA synthase</fullName>
    </alternativeName>
</protein>
<reference evidence="8" key="1">
    <citation type="journal article" date="2005" name="Science">
        <title>The genome sequence of Trypanosoma cruzi, etiologic agent of Chagas disease.</title>
        <authorList>
            <person name="El-Sayed N.M.A."/>
            <person name="Myler P.J."/>
            <person name="Bartholomeu D.C."/>
            <person name="Nilsson D."/>
            <person name="Aggarwal G."/>
            <person name="Tran A.-N."/>
            <person name="Ghedin E."/>
            <person name="Worthey E.A."/>
            <person name="Delcher A.L."/>
            <person name="Blandin G."/>
            <person name="Westenberger S.J."/>
            <person name="Caler E."/>
            <person name="Cerqueira G.C."/>
            <person name="Branche C."/>
            <person name="Haas B."/>
            <person name="Anupama A."/>
            <person name="Arner E."/>
            <person name="Aslund L."/>
            <person name="Attipoe P."/>
            <person name="Bontempi E."/>
            <person name="Bringaud F."/>
            <person name="Burton P."/>
            <person name="Cadag E."/>
            <person name="Campbell D.A."/>
            <person name="Carrington M."/>
            <person name="Crabtree J."/>
            <person name="Darban H."/>
            <person name="da Silveira J.F."/>
            <person name="de Jong P."/>
            <person name="Edwards K."/>
            <person name="Englund P.T."/>
            <person name="Fazelina G."/>
            <person name="Feldblyum T."/>
            <person name="Ferella M."/>
            <person name="Frasch A.C."/>
            <person name="Gull K."/>
            <person name="Horn D."/>
            <person name="Hou L."/>
            <person name="Huang Y."/>
            <person name="Kindlund E."/>
            <person name="Klingbeil M."/>
            <person name="Kluge S."/>
            <person name="Koo H."/>
            <person name="Lacerda D."/>
            <person name="Levin M.J."/>
            <person name="Lorenzi H."/>
            <person name="Louie T."/>
            <person name="Machado C.R."/>
            <person name="McCulloch R."/>
            <person name="McKenna A."/>
            <person name="Mizuno Y."/>
            <person name="Mottram J.C."/>
            <person name="Nelson S."/>
            <person name="Ochaya S."/>
            <person name="Osoegawa K."/>
            <person name="Pai G."/>
            <person name="Parsons M."/>
            <person name="Pentony M."/>
            <person name="Pettersson U."/>
            <person name="Pop M."/>
            <person name="Ramirez J.L."/>
            <person name="Rinta J."/>
            <person name="Robertson L."/>
            <person name="Salzberg S.L."/>
            <person name="Sanchez D.O."/>
            <person name="Seyler A."/>
            <person name="Sharma R."/>
            <person name="Shetty J."/>
            <person name="Simpson A.J."/>
            <person name="Sisk E."/>
            <person name="Tammi M.T."/>
            <person name="Tarleton R."/>
            <person name="Teixeira S."/>
            <person name="Van Aken S."/>
            <person name="Vogt C."/>
            <person name="Ward P.N."/>
            <person name="Wickstead B."/>
            <person name="Wortman J."/>
            <person name="White O."/>
            <person name="Fraser C.M."/>
            <person name="Stuart K.D."/>
            <person name="Andersson B."/>
        </authorList>
    </citation>
    <scope>NUCLEOTIDE SEQUENCE [LARGE SCALE GENOMIC DNA]</scope>
    <source>
        <strain evidence="8">CL Brener</strain>
    </source>
</reference>
<reference evidence="6" key="2">
    <citation type="journal article" date="2015" name="Parasitol. Res.">
        <title>Biosynthesis of very long chain fatty acids in Trypanosoma cruzi.</title>
        <authorList>
            <person name="Livore V.I."/>
            <person name="Uttaro A.D."/>
        </authorList>
    </citation>
    <scope>FUNCTION</scope>
    <scope>VARIANT CYS-12</scope>
</reference>
<evidence type="ECO:0000250" key="1">
    <source>
        <dbReference type="UniProtKB" id="A1L3X0"/>
    </source>
</evidence>
<evidence type="ECO:0000255" key="2"/>
<evidence type="ECO:0000255" key="3">
    <source>
        <dbReference type="RuleBase" id="RU361115"/>
    </source>
</evidence>
<evidence type="ECO:0000269" key="4">
    <source>
    </source>
</evidence>
<evidence type="ECO:0000303" key="5">
    <source>
    </source>
</evidence>
<evidence type="ECO:0000305" key="6"/>
<evidence type="ECO:0000312" key="7">
    <source>
        <dbReference type="EMBL" id="EAN96213.1"/>
    </source>
</evidence>
<evidence type="ECO:0000312" key="8">
    <source>
        <dbReference type="Proteomes" id="UP000002296"/>
    </source>
</evidence>
<comment type="function">
    <text evidence="4">Involved in the synthesis of fatty acids (PubMed:25339514). Elongates C16:0 and C18:0 fatty acids to C26:0, with C24:0 being the main product (PubMed:25339514).</text>
</comment>
<comment type="catalytic activity">
    <reaction evidence="3">
        <text>a very-long-chain acyl-CoA + malonyl-CoA + H(+) = a very-long-chain 3-oxoacyl-CoA + CO2 + CoA</text>
        <dbReference type="Rhea" id="RHEA:32727"/>
        <dbReference type="ChEBI" id="CHEBI:15378"/>
        <dbReference type="ChEBI" id="CHEBI:16526"/>
        <dbReference type="ChEBI" id="CHEBI:57287"/>
        <dbReference type="ChEBI" id="CHEBI:57384"/>
        <dbReference type="ChEBI" id="CHEBI:90725"/>
        <dbReference type="ChEBI" id="CHEBI:90736"/>
        <dbReference type="EC" id="2.3.1.199"/>
    </reaction>
    <physiologicalReaction direction="left-to-right" evidence="6">
        <dbReference type="Rhea" id="RHEA:32728"/>
    </physiologicalReaction>
</comment>
<comment type="subcellular location">
    <subcellularLocation>
        <location evidence="2">Membrane</location>
        <topology evidence="2">Multi-pass membrane protein</topology>
    </subcellularLocation>
</comment>
<comment type="similarity">
    <text evidence="3">Belongs to the ELO family.</text>
</comment>
<comment type="caution">
    <text evidence="4">In the reported experiments, the sequence appears to be a hybrid between the two predicted loci ELO4A and ELO4B which are highly similar.</text>
</comment>
<accession>Q4DUK4</accession>
<gene>
    <name evidence="5" type="primary">ELO4B</name>
    <name evidence="7" type="ORF">Tc00.1047053511245.160</name>
</gene>
<dbReference type="EC" id="2.3.1.199" evidence="3"/>
<dbReference type="EMBL" id="AAHK01000165">
    <property type="protein sequence ID" value="EAN96213.1"/>
    <property type="molecule type" value="Genomic_DNA"/>
</dbReference>
<dbReference type="RefSeq" id="XP_818064.1">
    <property type="nucleotide sequence ID" value="XM_812971.1"/>
</dbReference>
<dbReference type="SMR" id="Q4DUK4"/>
<dbReference type="FunCoup" id="Q4DUK4">
    <property type="interactions" value="295"/>
</dbReference>
<dbReference type="STRING" id="353153.Q4DUK4"/>
<dbReference type="PaxDb" id="353153-Q4DUK4"/>
<dbReference type="EnsemblProtists" id="EAN96213">
    <property type="protein sequence ID" value="EAN96213"/>
    <property type="gene ID" value="Tc00.1047053511245.160"/>
</dbReference>
<dbReference type="GeneID" id="3550218"/>
<dbReference type="KEGG" id="tcr:511245.160"/>
<dbReference type="eggNOG" id="KOG3072">
    <property type="taxonomic scope" value="Eukaryota"/>
</dbReference>
<dbReference type="InParanoid" id="Q4DUK4"/>
<dbReference type="OMA" id="IFGIQHF"/>
<dbReference type="Proteomes" id="UP000002296">
    <property type="component" value="Unassembled WGS sequence"/>
</dbReference>
<dbReference type="GO" id="GO:0005789">
    <property type="term" value="C:endoplasmic reticulum membrane"/>
    <property type="evidence" value="ECO:0007669"/>
    <property type="project" value="TreeGrafter"/>
</dbReference>
<dbReference type="GO" id="GO:0009922">
    <property type="term" value="F:fatty acid elongase activity"/>
    <property type="evidence" value="ECO:0007669"/>
    <property type="project" value="UniProtKB-EC"/>
</dbReference>
<dbReference type="GO" id="GO:0034625">
    <property type="term" value="P:fatty acid elongation, monounsaturated fatty acid"/>
    <property type="evidence" value="ECO:0007669"/>
    <property type="project" value="TreeGrafter"/>
</dbReference>
<dbReference type="GO" id="GO:0034626">
    <property type="term" value="P:fatty acid elongation, polyunsaturated fatty acid"/>
    <property type="evidence" value="ECO:0007669"/>
    <property type="project" value="TreeGrafter"/>
</dbReference>
<dbReference type="GO" id="GO:0019367">
    <property type="term" value="P:fatty acid elongation, saturated fatty acid"/>
    <property type="evidence" value="ECO:0007669"/>
    <property type="project" value="TreeGrafter"/>
</dbReference>
<dbReference type="GO" id="GO:0030148">
    <property type="term" value="P:sphingolipid biosynthetic process"/>
    <property type="evidence" value="ECO:0007669"/>
    <property type="project" value="TreeGrafter"/>
</dbReference>
<dbReference type="GO" id="GO:0042761">
    <property type="term" value="P:very long-chain fatty acid biosynthetic process"/>
    <property type="evidence" value="ECO:0007669"/>
    <property type="project" value="TreeGrafter"/>
</dbReference>
<dbReference type="InterPro" id="IPR030457">
    <property type="entry name" value="ELO_CS"/>
</dbReference>
<dbReference type="InterPro" id="IPR002076">
    <property type="entry name" value="ELO_fam"/>
</dbReference>
<dbReference type="PANTHER" id="PTHR11157:SF17">
    <property type="entry name" value="ELONGATION OF VERY LONG CHAIN FATTY ACIDS PROTEIN 6"/>
    <property type="match status" value="1"/>
</dbReference>
<dbReference type="PANTHER" id="PTHR11157">
    <property type="entry name" value="FATTY ACID ACYL TRANSFERASE-RELATED"/>
    <property type="match status" value="1"/>
</dbReference>
<dbReference type="Pfam" id="PF01151">
    <property type="entry name" value="ELO"/>
    <property type="match status" value="1"/>
</dbReference>
<dbReference type="PROSITE" id="PS01188">
    <property type="entry name" value="ELO"/>
    <property type="match status" value="1"/>
</dbReference>
<feature type="chain" id="PRO_0000459372" description="Very long chain fatty acid elongase 4">
    <location>
        <begin position="1"/>
        <end position="287"/>
    </location>
</feature>
<feature type="transmembrane region" description="Helical" evidence="2">
    <location>
        <begin position="33"/>
        <end position="53"/>
    </location>
</feature>
<feature type="transmembrane region" description="Helical" evidence="2">
    <location>
        <begin position="64"/>
        <end position="84"/>
    </location>
</feature>
<feature type="transmembrane region" description="Helical" evidence="2">
    <location>
        <begin position="115"/>
        <end position="135"/>
    </location>
</feature>
<feature type="transmembrane region" description="Helical" evidence="2">
    <location>
        <begin position="150"/>
        <end position="170"/>
    </location>
</feature>
<feature type="transmembrane region" description="Helical" evidence="2">
    <location>
        <begin position="172"/>
        <end position="192"/>
    </location>
</feature>
<feature type="transmembrane region" description="Helical" evidence="2">
    <location>
        <begin position="199"/>
        <end position="219"/>
    </location>
</feature>
<feature type="transmembrane region" description="Helical" evidence="2">
    <location>
        <begin position="241"/>
        <end position="261"/>
    </location>
</feature>
<feature type="short sequence motif" description="HxxHH motif" evidence="5">
    <location>
        <begin position="145"/>
        <end position="149"/>
    </location>
</feature>
<feature type="active site" description="Nucleophile" evidence="1">
    <location>
        <position position="148"/>
    </location>
</feature>
<feature type="sequence variant" evidence="4">
    <original>R</original>
    <variation>C</variation>
    <location>
        <position position="12"/>
    </location>
</feature>
<proteinExistence type="inferred from homology"/>
<name>ELO4B_TRYCC</name>
<sequence length="287" mass="33535">MDFVLNTIQWLREVPHNFKGEFATVVFDDSADILVYCCVLYILLVFMVPEHIMKNREPFNLRLPFVFWNIGLCLFSFCGAYSCVKNMIALYWERGFYRTTCFFDSSVAYDGEFAFWVFYFILSKIPEMIDTVFLVFQKKPVIFLHWYHHLTVAIFCWHAGHALIPSGLWFATMNYCVHSIMYFYYFMCACGMRKFIRPIAPFITMMQLLQMVAGTLIVLYTAYHSYLGESGCEVDRTSIRLGLVMYGSYFFLFAVLFGKLYLKKQVKPSGTASAYAMSKKRNGEKMA</sequence>